<organism>
    <name type="scientific">Wolbachia sp. subsp. Drosophila simulans (strain wRi)</name>
    <dbReference type="NCBI Taxonomy" id="66084"/>
    <lineage>
        <taxon>Bacteria</taxon>
        <taxon>Pseudomonadati</taxon>
        <taxon>Pseudomonadota</taxon>
        <taxon>Alphaproteobacteria</taxon>
        <taxon>Rickettsiales</taxon>
        <taxon>Anaplasmataceae</taxon>
        <taxon>Wolbachieae</taxon>
        <taxon>Wolbachia</taxon>
    </lineage>
</organism>
<proteinExistence type="inferred from homology"/>
<evidence type="ECO:0000255" key="1">
    <source>
        <dbReference type="HAMAP-Rule" id="MF_00558"/>
    </source>
</evidence>
<sequence length="383" mass="41555">MNIHEYQAKEVLHKFNVSVPKGFVATSAEEVKTQVSQLKSDVFVVKAQIHAGGRGKAGGVKLAKSAEEAQQFVKDMIGMTLVTHQTGPSGQQVRKVYVEEGSSIKKEYYLSLVIDPKLSRPIFIFSSEGGMDIEEVAKNSPAKIVKFDIDSATSFDSSKLSSSFHLSPEQIEKITNVAKNIYDAFIATDASQIEINPLVETSSGDFIALDAKINFDDNALYRHPEIMELRDYDEEVKEEIEASKYGLSYIKMDGSIGCMVNGAGLAMATMDIIKYYGAEPANFLDVGGGASKETVTEAFKIILSDSNVKGILVNIFGGIMRCDIIASGIVAAAKEMSIKVPLVVRLSGTNFEEGKKILEESGLNIIAADELGDAAQKIVKEVK</sequence>
<protein>
    <recommendedName>
        <fullName evidence="1">Succinate--CoA ligase [ADP-forming] subunit beta</fullName>
        <ecNumber evidence="1">6.2.1.5</ecNumber>
    </recommendedName>
    <alternativeName>
        <fullName evidence="1">Succinyl-CoA synthetase subunit beta</fullName>
        <shortName evidence="1">SCS-beta</shortName>
    </alternativeName>
</protein>
<comment type="function">
    <text evidence="1">Succinyl-CoA synthetase functions in the citric acid cycle (TCA), coupling the hydrolysis of succinyl-CoA to the synthesis of either ATP or GTP and thus represents the only step of substrate-level phosphorylation in the TCA. The beta subunit provides nucleotide specificity of the enzyme and binds the substrate succinate, while the binding sites for coenzyme A and phosphate are found in the alpha subunit.</text>
</comment>
<comment type="catalytic activity">
    <reaction evidence="1">
        <text>succinate + ATP + CoA = succinyl-CoA + ADP + phosphate</text>
        <dbReference type="Rhea" id="RHEA:17661"/>
        <dbReference type="ChEBI" id="CHEBI:30031"/>
        <dbReference type="ChEBI" id="CHEBI:30616"/>
        <dbReference type="ChEBI" id="CHEBI:43474"/>
        <dbReference type="ChEBI" id="CHEBI:57287"/>
        <dbReference type="ChEBI" id="CHEBI:57292"/>
        <dbReference type="ChEBI" id="CHEBI:456216"/>
        <dbReference type="EC" id="6.2.1.5"/>
    </reaction>
    <physiologicalReaction direction="right-to-left" evidence="1">
        <dbReference type="Rhea" id="RHEA:17663"/>
    </physiologicalReaction>
</comment>
<comment type="catalytic activity">
    <reaction evidence="1">
        <text>GTP + succinate + CoA = succinyl-CoA + GDP + phosphate</text>
        <dbReference type="Rhea" id="RHEA:22120"/>
        <dbReference type="ChEBI" id="CHEBI:30031"/>
        <dbReference type="ChEBI" id="CHEBI:37565"/>
        <dbReference type="ChEBI" id="CHEBI:43474"/>
        <dbReference type="ChEBI" id="CHEBI:57287"/>
        <dbReference type="ChEBI" id="CHEBI:57292"/>
        <dbReference type="ChEBI" id="CHEBI:58189"/>
    </reaction>
    <physiologicalReaction direction="right-to-left" evidence="1">
        <dbReference type="Rhea" id="RHEA:22122"/>
    </physiologicalReaction>
</comment>
<comment type="cofactor">
    <cofactor evidence="1">
        <name>Mg(2+)</name>
        <dbReference type="ChEBI" id="CHEBI:18420"/>
    </cofactor>
    <text evidence="1">Binds 1 Mg(2+) ion per subunit.</text>
</comment>
<comment type="pathway">
    <text evidence="1">Carbohydrate metabolism; tricarboxylic acid cycle; succinate from succinyl-CoA (ligase route): step 1/1.</text>
</comment>
<comment type="subunit">
    <text evidence="1">Heterotetramer of two alpha and two beta subunits.</text>
</comment>
<comment type="similarity">
    <text evidence="1">Belongs to the succinate/malate CoA ligase beta subunit family.</text>
</comment>
<gene>
    <name evidence="1" type="primary">sucC</name>
    <name type="ordered locus">WRi_011880</name>
</gene>
<name>SUCC_WOLWR</name>
<keyword id="KW-0067">ATP-binding</keyword>
<keyword id="KW-0436">Ligase</keyword>
<keyword id="KW-0460">Magnesium</keyword>
<keyword id="KW-0479">Metal-binding</keyword>
<keyword id="KW-0547">Nucleotide-binding</keyword>
<keyword id="KW-0816">Tricarboxylic acid cycle</keyword>
<feature type="chain" id="PRO_1000197720" description="Succinate--CoA ligase [ADP-forming] subunit beta">
    <location>
        <begin position="1"/>
        <end position="383"/>
    </location>
</feature>
<feature type="domain" description="ATP-grasp" evidence="1">
    <location>
        <begin position="9"/>
        <end position="241"/>
    </location>
</feature>
<feature type="binding site" evidence="1">
    <location>
        <position position="46"/>
    </location>
    <ligand>
        <name>ATP</name>
        <dbReference type="ChEBI" id="CHEBI:30616"/>
    </ligand>
</feature>
<feature type="binding site" evidence="1">
    <location>
        <begin position="53"/>
        <end position="55"/>
    </location>
    <ligand>
        <name>ATP</name>
        <dbReference type="ChEBI" id="CHEBI:30616"/>
    </ligand>
</feature>
<feature type="binding site" evidence="1">
    <location>
        <position position="99"/>
    </location>
    <ligand>
        <name>ATP</name>
        <dbReference type="ChEBI" id="CHEBI:30616"/>
    </ligand>
</feature>
<feature type="binding site" evidence="1">
    <location>
        <position position="102"/>
    </location>
    <ligand>
        <name>ATP</name>
        <dbReference type="ChEBI" id="CHEBI:30616"/>
    </ligand>
</feature>
<feature type="binding site" evidence="1">
    <location>
        <position position="107"/>
    </location>
    <ligand>
        <name>ATP</name>
        <dbReference type="ChEBI" id="CHEBI:30616"/>
    </ligand>
</feature>
<feature type="binding site" evidence="1">
    <location>
        <position position="196"/>
    </location>
    <ligand>
        <name>Mg(2+)</name>
        <dbReference type="ChEBI" id="CHEBI:18420"/>
    </ligand>
</feature>
<feature type="binding site" evidence="1">
    <location>
        <position position="210"/>
    </location>
    <ligand>
        <name>Mg(2+)</name>
        <dbReference type="ChEBI" id="CHEBI:18420"/>
    </ligand>
</feature>
<feature type="binding site" evidence="1">
    <location>
        <position position="261"/>
    </location>
    <ligand>
        <name>substrate</name>
        <note>ligand shared with subunit alpha</note>
    </ligand>
</feature>
<feature type="binding site" evidence="1">
    <location>
        <begin position="318"/>
        <end position="320"/>
    </location>
    <ligand>
        <name>substrate</name>
        <note>ligand shared with subunit alpha</note>
    </ligand>
</feature>
<dbReference type="EC" id="6.2.1.5" evidence="1"/>
<dbReference type="EMBL" id="CP001391">
    <property type="protein sequence ID" value="ACN95876.1"/>
    <property type="molecule type" value="Genomic_DNA"/>
</dbReference>
<dbReference type="RefSeq" id="WP_007548473.1">
    <property type="nucleotide sequence ID" value="NZ_MKIF01000096.1"/>
</dbReference>
<dbReference type="SMR" id="C0R4N4"/>
<dbReference type="STRING" id="66084.WRi_011880"/>
<dbReference type="KEGG" id="wri:WRi_011880"/>
<dbReference type="HOGENOM" id="CLU_037430_0_2_5"/>
<dbReference type="UniPathway" id="UPA00223">
    <property type="reaction ID" value="UER00999"/>
</dbReference>
<dbReference type="Proteomes" id="UP000001293">
    <property type="component" value="Chromosome"/>
</dbReference>
<dbReference type="GO" id="GO:0005829">
    <property type="term" value="C:cytosol"/>
    <property type="evidence" value="ECO:0007669"/>
    <property type="project" value="TreeGrafter"/>
</dbReference>
<dbReference type="GO" id="GO:0042709">
    <property type="term" value="C:succinate-CoA ligase complex"/>
    <property type="evidence" value="ECO:0007669"/>
    <property type="project" value="TreeGrafter"/>
</dbReference>
<dbReference type="GO" id="GO:0005524">
    <property type="term" value="F:ATP binding"/>
    <property type="evidence" value="ECO:0007669"/>
    <property type="project" value="UniProtKB-UniRule"/>
</dbReference>
<dbReference type="GO" id="GO:0000287">
    <property type="term" value="F:magnesium ion binding"/>
    <property type="evidence" value="ECO:0007669"/>
    <property type="project" value="UniProtKB-UniRule"/>
</dbReference>
<dbReference type="GO" id="GO:0004775">
    <property type="term" value="F:succinate-CoA ligase (ADP-forming) activity"/>
    <property type="evidence" value="ECO:0007669"/>
    <property type="project" value="UniProtKB-UniRule"/>
</dbReference>
<dbReference type="GO" id="GO:0004776">
    <property type="term" value="F:succinate-CoA ligase (GDP-forming) activity"/>
    <property type="evidence" value="ECO:0007669"/>
    <property type="project" value="RHEA"/>
</dbReference>
<dbReference type="GO" id="GO:0006104">
    <property type="term" value="P:succinyl-CoA metabolic process"/>
    <property type="evidence" value="ECO:0007669"/>
    <property type="project" value="TreeGrafter"/>
</dbReference>
<dbReference type="GO" id="GO:0006099">
    <property type="term" value="P:tricarboxylic acid cycle"/>
    <property type="evidence" value="ECO:0007669"/>
    <property type="project" value="UniProtKB-UniRule"/>
</dbReference>
<dbReference type="FunFam" id="3.30.1490.20:FF:000002">
    <property type="entry name" value="Succinate--CoA ligase [ADP-forming] subunit beta"/>
    <property type="match status" value="1"/>
</dbReference>
<dbReference type="FunFam" id="3.30.470.20:FF:000002">
    <property type="entry name" value="Succinate--CoA ligase [ADP-forming] subunit beta"/>
    <property type="match status" value="1"/>
</dbReference>
<dbReference type="FunFam" id="3.40.50.261:FF:000001">
    <property type="entry name" value="Succinate--CoA ligase [ADP-forming] subunit beta"/>
    <property type="match status" value="1"/>
</dbReference>
<dbReference type="Gene3D" id="3.30.1490.20">
    <property type="entry name" value="ATP-grasp fold, A domain"/>
    <property type="match status" value="1"/>
</dbReference>
<dbReference type="Gene3D" id="3.30.470.20">
    <property type="entry name" value="ATP-grasp fold, B domain"/>
    <property type="match status" value="1"/>
</dbReference>
<dbReference type="Gene3D" id="3.40.50.261">
    <property type="entry name" value="Succinyl-CoA synthetase domains"/>
    <property type="match status" value="1"/>
</dbReference>
<dbReference type="HAMAP" id="MF_00558">
    <property type="entry name" value="Succ_CoA_beta"/>
    <property type="match status" value="1"/>
</dbReference>
<dbReference type="InterPro" id="IPR011761">
    <property type="entry name" value="ATP-grasp"/>
</dbReference>
<dbReference type="InterPro" id="IPR013650">
    <property type="entry name" value="ATP-grasp_succ-CoA_synth-type"/>
</dbReference>
<dbReference type="InterPro" id="IPR013815">
    <property type="entry name" value="ATP_grasp_subdomain_1"/>
</dbReference>
<dbReference type="InterPro" id="IPR017866">
    <property type="entry name" value="Succ-CoA_synthase_bsu_CS"/>
</dbReference>
<dbReference type="InterPro" id="IPR005811">
    <property type="entry name" value="SUCC_ACL_C"/>
</dbReference>
<dbReference type="InterPro" id="IPR005809">
    <property type="entry name" value="Succ_CoA_ligase-like_bsu"/>
</dbReference>
<dbReference type="InterPro" id="IPR016102">
    <property type="entry name" value="Succinyl-CoA_synth-like"/>
</dbReference>
<dbReference type="NCBIfam" id="NF001913">
    <property type="entry name" value="PRK00696.1"/>
    <property type="match status" value="1"/>
</dbReference>
<dbReference type="NCBIfam" id="TIGR01016">
    <property type="entry name" value="sucCoAbeta"/>
    <property type="match status" value="1"/>
</dbReference>
<dbReference type="PANTHER" id="PTHR11815:SF10">
    <property type="entry name" value="SUCCINATE--COA LIGASE [GDP-FORMING] SUBUNIT BETA, MITOCHONDRIAL"/>
    <property type="match status" value="1"/>
</dbReference>
<dbReference type="PANTHER" id="PTHR11815">
    <property type="entry name" value="SUCCINYL-COA SYNTHETASE BETA CHAIN"/>
    <property type="match status" value="1"/>
</dbReference>
<dbReference type="Pfam" id="PF08442">
    <property type="entry name" value="ATP-grasp_2"/>
    <property type="match status" value="1"/>
</dbReference>
<dbReference type="Pfam" id="PF00549">
    <property type="entry name" value="Ligase_CoA"/>
    <property type="match status" value="1"/>
</dbReference>
<dbReference type="PIRSF" id="PIRSF001554">
    <property type="entry name" value="SucCS_beta"/>
    <property type="match status" value="1"/>
</dbReference>
<dbReference type="SUPFAM" id="SSF56059">
    <property type="entry name" value="Glutathione synthetase ATP-binding domain-like"/>
    <property type="match status" value="1"/>
</dbReference>
<dbReference type="SUPFAM" id="SSF52210">
    <property type="entry name" value="Succinyl-CoA synthetase domains"/>
    <property type="match status" value="1"/>
</dbReference>
<dbReference type="PROSITE" id="PS50975">
    <property type="entry name" value="ATP_GRASP"/>
    <property type="match status" value="1"/>
</dbReference>
<dbReference type="PROSITE" id="PS01217">
    <property type="entry name" value="SUCCINYL_COA_LIG_3"/>
    <property type="match status" value="1"/>
</dbReference>
<reference key="1">
    <citation type="journal article" date="2009" name="Proc. Natl. Acad. Sci. U.S.A.">
        <title>The mosaic genome structure of the Wolbachia wRi strain infecting Drosophila simulans.</title>
        <authorList>
            <person name="Klasson L."/>
            <person name="Westberg J."/>
            <person name="Sapountzis P."/>
            <person name="Naeslund K."/>
            <person name="Lutnaes Y."/>
            <person name="Darby A.C."/>
            <person name="Veneti Z."/>
            <person name="Chen L."/>
            <person name="Braig H.R."/>
            <person name="Garrett R."/>
            <person name="Bourtzis K."/>
            <person name="Andersson S.G."/>
        </authorList>
    </citation>
    <scope>NUCLEOTIDE SEQUENCE [LARGE SCALE GENOMIC DNA]</scope>
    <source>
        <strain>wRi</strain>
    </source>
</reference>
<accession>C0R4N4</accession>